<comment type="subcellular location">
    <subcellularLocation>
        <location evidence="1">Cell membrane</location>
        <topology evidence="1">Lipid-anchor</topology>
    </subcellularLocation>
</comment>
<comment type="similarity">
    <text evidence="1">Belongs to the UPF0257 family.</text>
</comment>
<organism>
    <name type="scientific">Salmonella heidelberg (strain SL476)</name>
    <dbReference type="NCBI Taxonomy" id="454169"/>
    <lineage>
        <taxon>Bacteria</taxon>
        <taxon>Pseudomonadati</taxon>
        <taxon>Pseudomonadota</taxon>
        <taxon>Gammaproteobacteria</taxon>
        <taxon>Enterobacterales</taxon>
        <taxon>Enterobacteriaceae</taxon>
        <taxon>Salmonella</taxon>
    </lineage>
</organism>
<accession>B4THT3</accession>
<feature type="signal peptide" evidence="1">
    <location>
        <begin position="1"/>
        <end position="16"/>
    </location>
</feature>
<feature type="chain" id="PRO_1000136559" description="UPF0257 lipoprotein YnfC">
    <location>
        <begin position="17"/>
        <end position="236"/>
    </location>
</feature>
<feature type="lipid moiety-binding region" description="N-palmitoyl cysteine" evidence="1">
    <location>
        <position position="17"/>
    </location>
</feature>
<feature type="lipid moiety-binding region" description="S-diacylglycerol cysteine" evidence="1">
    <location>
        <position position="17"/>
    </location>
</feature>
<protein>
    <recommendedName>
        <fullName evidence="1">UPF0257 lipoprotein YnfC</fullName>
    </recommendedName>
</protein>
<name>YNFC_SALHS</name>
<keyword id="KW-1003">Cell membrane</keyword>
<keyword id="KW-0449">Lipoprotein</keyword>
<keyword id="KW-0472">Membrane</keyword>
<keyword id="KW-0564">Palmitate</keyword>
<keyword id="KW-0732">Signal</keyword>
<dbReference type="EMBL" id="CP001120">
    <property type="protein sequence ID" value="ACF70258.1"/>
    <property type="molecule type" value="Genomic_DNA"/>
</dbReference>
<dbReference type="RefSeq" id="WP_000743125.1">
    <property type="nucleotide sequence ID" value="NC_011083.1"/>
</dbReference>
<dbReference type="SMR" id="B4THT3"/>
<dbReference type="KEGG" id="seh:SeHA_C1671"/>
<dbReference type="HOGENOM" id="CLU_1174761_0_0_6"/>
<dbReference type="Proteomes" id="UP000001866">
    <property type="component" value="Chromosome"/>
</dbReference>
<dbReference type="GO" id="GO:0005886">
    <property type="term" value="C:plasma membrane"/>
    <property type="evidence" value="ECO:0007669"/>
    <property type="project" value="UniProtKB-SubCell"/>
</dbReference>
<dbReference type="HAMAP" id="MF_01065">
    <property type="entry name" value="UPF0257"/>
    <property type="match status" value="1"/>
</dbReference>
<dbReference type="InterPro" id="IPR010646">
    <property type="entry name" value="UPF0257"/>
</dbReference>
<dbReference type="NCBIfam" id="NF002798">
    <property type="entry name" value="PRK02939.1"/>
    <property type="match status" value="1"/>
</dbReference>
<dbReference type="Pfam" id="PF06788">
    <property type="entry name" value="UPF0257"/>
    <property type="match status" value="1"/>
</dbReference>
<dbReference type="PROSITE" id="PS51257">
    <property type="entry name" value="PROKAR_LIPOPROTEIN"/>
    <property type="match status" value="1"/>
</dbReference>
<reference key="1">
    <citation type="journal article" date="2011" name="J. Bacteriol.">
        <title>Comparative genomics of 28 Salmonella enterica isolates: evidence for CRISPR-mediated adaptive sublineage evolution.</title>
        <authorList>
            <person name="Fricke W.F."/>
            <person name="Mammel M.K."/>
            <person name="McDermott P.F."/>
            <person name="Tartera C."/>
            <person name="White D.G."/>
            <person name="Leclerc J.E."/>
            <person name="Ravel J."/>
            <person name="Cebula T.A."/>
        </authorList>
    </citation>
    <scope>NUCLEOTIDE SEQUENCE [LARGE SCALE GENOMIC DNA]</scope>
    <source>
        <strain>SL476</strain>
    </source>
</reference>
<gene>
    <name evidence="1" type="primary">ynfC</name>
    <name type="ordered locus">SeHA_C1671</name>
</gene>
<evidence type="ECO:0000255" key="1">
    <source>
        <dbReference type="HAMAP-Rule" id="MF_01065"/>
    </source>
</evidence>
<sequence length="236" mass="26243">MKKPLLLTLLCMILAGCDNPKSLESFTPEMASFSNEFDFDPLRGPVKDFSQTLMSENGEVAKQVTGTLSQEGCFDTLELHDLENNTGLALVLDANYYRDAQTLEKKVQLQGKCQLAALPSAGVTWETDDNGFVVSATGKEMKVEYRYDSEGYPVGKTTINSQNRLSVTAKPSANPRKKLDYTAVSRVDDRQVGNVTQSCEYDAYANPVDCRLVIVDESVKPAVSHHYTIKNRIDYY</sequence>
<proteinExistence type="inferred from homology"/>